<comment type="function">
    <text evidence="1">Functions by promoting the formation of the first peptide bond.</text>
</comment>
<comment type="subcellular location">
    <subcellularLocation>
        <location evidence="1">Cytoplasm</location>
    </subcellularLocation>
</comment>
<comment type="similarity">
    <text evidence="1">Belongs to the eIF-5A family.</text>
</comment>
<evidence type="ECO:0000255" key="1">
    <source>
        <dbReference type="HAMAP-Rule" id="MF_00085"/>
    </source>
</evidence>
<name>IF5A_META3</name>
<organism>
    <name type="scientific">Methanococcus aeolicus (strain ATCC BAA-1280 / DSM 17508 / OCM 812 / Nankai-3)</name>
    <dbReference type="NCBI Taxonomy" id="419665"/>
    <lineage>
        <taxon>Archaea</taxon>
        <taxon>Methanobacteriati</taxon>
        <taxon>Methanobacteriota</taxon>
        <taxon>Methanomada group</taxon>
        <taxon>Methanococci</taxon>
        <taxon>Methanococcales</taxon>
        <taxon>Methanococcaceae</taxon>
        <taxon>Methanococcus</taxon>
    </lineage>
</organism>
<feature type="chain" id="PRO_1000007908" description="Translation initiation factor 5A">
    <location>
        <begin position="1"/>
        <end position="131"/>
    </location>
</feature>
<feature type="modified residue" description="Hypusine" evidence="1">
    <location>
        <position position="37"/>
    </location>
</feature>
<reference key="1">
    <citation type="submission" date="2007-06" db="EMBL/GenBank/DDBJ databases">
        <title>Complete sequence of Methanococcus aeolicus Nankai-3.</title>
        <authorList>
            <consortium name="US DOE Joint Genome Institute"/>
            <person name="Copeland A."/>
            <person name="Lucas S."/>
            <person name="Lapidus A."/>
            <person name="Barry K."/>
            <person name="Glavina del Rio T."/>
            <person name="Dalin E."/>
            <person name="Tice H."/>
            <person name="Pitluck S."/>
            <person name="Chain P."/>
            <person name="Malfatti S."/>
            <person name="Shin M."/>
            <person name="Vergez L."/>
            <person name="Schmutz J."/>
            <person name="Larimer F."/>
            <person name="Land M."/>
            <person name="Hauser L."/>
            <person name="Kyrpides N."/>
            <person name="Lykidis A."/>
            <person name="Sieprawska-Lupa M."/>
            <person name="Whitman W.B."/>
            <person name="Richardson P."/>
        </authorList>
    </citation>
    <scope>NUCLEOTIDE SEQUENCE [LARGE SCALE GENOMIC DNA]</scope>
    <source>
        <strain>ATCC BAA-1280 / DSM 17508 / OCM 812 / Nankai-3</strain>
    </source>
</reference>
<dbReference type="EMBL" id="CP000743">
    <property type="protein sequence ID" value="ABR56496.1"/>
    <property type="molecule type" value="Genomic_DNA"/>
</dbReference>
<dbReference type="RefSeq" id="WP_011973628.1">
    <property type="nucleotide sequence ID" value="NC_009635.1"/>
</dbReference>
<dbReference type="SMR" id="A6UVH4"/>
<dbReference type="STRING" id="419665.Maeo_0915"/>
<dbReference type="GeneID" id="5327472"/>
<dbReference type="KEGG" id="mae:Maeo_0915"/>
<dbReference type="eggNOG" id="arCOG04277">
    <property type="taxonomic scope" value="Archaea"/>
</dbReference>
<dbReference type="HOGENOM" id="CLU_102600_3_0_2"/>
<dbReference type="OrthoDB" id="23689at2157"/>
<dbReference type="Proteomes" id="UP000001106">
    <property type="component" value="Chromosome"/>
</dbReference>
<dbReference type="GO" id="GO:0005737">
    <property type="term" value="C:cytoplasm"/>
    <property type="evidence" value="ECO:0007669"/>
    <property type="project" value="UniProtKB-SubCell"/>
</dbReference>
<dbReference type="GO" id="GO:0043022">
    <property type="term" value="F:ribosome binding"/>
    <property type="evidence" value="ECO:0007669"/>
    <property type="project" value="InterPro"/>
</dbReference>
<dbReference type="GO" id="GO:0003723">
    <property type="term" value="F:RNA binding"/>
    <property type="evidence" value="ECO:0007669"/>
    <property type="project" value="InterPro"/>
</dbReference>
<dbReference type="GO" id="GO:0003746">
    <property type="term" value="F:translation elongation factor activity"/>
    <property type="evidence" value="ECO:0007669"/>
    <property type="project" value="InterPro"/>
</dbReference>
<dbReference type="GO" id="GO:0003743">
    <property type="term" value="F:translation initiation factor activity"/>
    <property type="evidence" value="ECO:0007669"/>
    <property type="project" value="UniProtKB-UniRule"/>
</dbReference>
<dbReference type="GO" id="GO:0045901">
    <property type="term" value="P:positive regulation of translational elongation"/>
    <property type="evidence" value="ECO:0007669"/>
    <property type="project" value="InterPro"/>
</dbReference>
<dbReference type="GO" id="GO:0045905">
    <property type="term" value="P:positive regulation of translational termination"/>
    <property type="evidence" value="ECO:0007669"/>
    <property type="project" value="InterPro"/>
</dbReference>
<dbReference type="CDD" id="cd04467">
    <property type="entry name" value="S1_aIF5A"/>
    <property type="match status" value="1"/>
</dbReference>
<dbReference type="Gene3D" id="2.30.30.30">
    <property type="match status" value="1"/>
</dbReference>
<dbReference type="Gene3D" id="2.40.50.140">
    <property type="entry name" value="Nucleic acid-binding proteins"/>
    <property type="match status" value="1"/>
</dbReference>
<dbReference type="HAMAP" id="MF_00085">
    <property type="entry name" value="eIF_5A"/>
    <property type="match status" value="1"/>
</dbReference>
<dbReference type="InterPro" id="IPR001884">
    <property type="entry name" value="IF5A-like"/>
</dbReference>
<dbReference type="InterPro" id="IPR048670">
    <property type="entry name" value="IF5A-like_N"/>
</dbReference>
<dbReference type="InterPro" id="IPR012340">
    <property type="entry name" value="NA-bd_OB-fold"/>
</dbReference>
<dbReference type="InterPro" id="IPR014722">
    <property type="entry name" value="Rib_uL2_dom2"/>
</dbReference>
<dbReference type="InterPro" id="IPR019769">
    <property type="entry name" value="Trans_elong_IF5A_hypusine_site"/>
</dbReference>
<dbReference type="InterPro" id="IPR022847">
    <property type="entry name" value="Transl_elong_IF5A_arc"/>
</dbReference>
<dbReference type="InterPro" id="IPR020189">
    <property type="entry name" value="Transl_elong_IF5A_C"/>
</dbReference>
<dbReference type="InterPro" id="IPR008991">
    <property type="entry name" value="Translation_prot_SH3-like_sf"/>
</dbReference>
<dbReference type="NCBIfam" id="TIGR00037">
    <property type="entry name" value="eIF_5A"/>
    <property type="match status" value="1"/>
</dbReference>
<dbReference type="NCBIfam" id="NF003076">
    <property type="entry name" value="PRK03999.1"/>
    <property type="match status" value="1"/>
</dbReference>
<dbReference type="PANTHER" id="PTHR11673">
    <property type="entry name" value="TRANSLATION INITIATION FACTOR 5A FAMILY MEMBER"/>
    <property type="match status" value="1"/>
</dbReference>
<dbReference type="Pfam" id="PF21485">
    <property type="entry name" value="IF5A-like_N"/>
    <property type="match status" value="1"/>
</dbReference>
<dbReference type="PIRSF" id="PIRSF003025">
    <property type="entry name" value="eIF5A"/>
    <property type="match status" value="1"/>
</dbReference>
<dbReference type="SMART" id="SM01376">
    <property type="entry name" value="eIF-5a"/>
    <property type="match status" value="1"/>
</dbReference>
<dbReference type="SUPFAM" id="SSF50249">
    <property type="entry name" value="Nucleic acid-binding proteins"/>
    <property type="match status" value="1"/>
</dbReference>
<dbReference type="SUPFAM" id="SSF50104">
    <property type="entry name" value="Translation proteins SH3-like domain"/>
    <property type="match status" value="1"/>
</dbReference>
<dbReference type="PROSITE" id="PS00302">
    <property type="entry name" value="IF5A_HYPUSINE"/>
    <property type="match status" value="1"/>
</dbReference>
<protein>
    <recommendedName>
        <fullName evidence="1">Translation initiation factor 5A</fullName>
    </recommendedName>
    <alternativeName>
        <fullName evidence="1">Hypusine-containing protein</fullName>
    </alternativeName>
    <alternativeName>
        <fullName evidence="1">eIF-5A</fullName>
    </alternativeName>
</protein>
<accession>A6UVH4</accession>
<proteinExistence type="inferred from homology"/>
<gene>
    <name type="primary">eIF5A</name>
    <name type="ordered locus">Maeo_0915</name>
</gene>
<keyword id="KW-0963">Cytoplasm</keyword>
<keyword id="KW-0385">Hypusine</keyword>
<keyword id="KW-0396">Initiation factor</keyword>
<keyword id="KW-0648">Protein biosynthesis</keyword>
<sequence length="131" mass="14518">MPGTKPVELGSLKVGQYIVIDEVPCRIVDMTKSKPGKHGGAKIRLTAMGLFENVKKEHVGPTSSRADVPLIDKRKGQVLSIMGDLVQIMDLETFDTLEIPMPEDVEEIDSGMEVEYFEAVGRYKITRVISK</sequence>